<protein>
    <recommendedName>
        <fullName evidence="1">Large ribosomal subunit protein bL35</fullName>
    </recommendedName>
    <alternativeName>
        <fullName evidence="2">50S ribosomal protein L35</fullName>
    </alternativeName>
</protein>
<keyword id="KW-0687">Ribonucleoprotein</keyword>
<keyword id="KW-0689">Ribosomal protein</keyword>
<sequence>MSKLKTRKSAAKRFKATATGKFMRRRAFHNHLLDHKSSKLKRHLSTKAVVDERDADNVRLMIPYA</sequence>
<reference key="1">
    <citation type="journal article" date="2007" name="PLoS Genet.">
        <title>Patterns and implications of gene gain and loss in the evolution of Prochlorococcus.</title>
        <authorList>
            <person name="Kettler G.C."/>
            <person name="Martiny A.C."/>
            <person name="Huang K."/>
            <person name="Zucker J."/>
            <person name="Coleman M.L."/>
            <person name="Rodrigue S."/>
            <person name="Chen F."/>
            <person name="Lapidus A."/>
            <person name="Ferriera S."/>
            <person name="Johnson J."/>
            <person name="Steglich C."/>
            <person name="Church G.M."/>
            <person name="Richardson P."/>
            <person name="Chisholm S.W."/>
        </authorList>
    </citation>
    <scope>NUCLEOTIDE SEQUENCE [LARGE SCALE GENOMIC DNA]</scope>
    <source>
        <strain>MIT 9215</strain>
    </source>
</reference>
<comment type="similarity">
    <text evidence="1">Belongs to the bacterial ribosomal protein bL35 family.</text>
</comment>
<feature type="chain" id="PRO_1000060893" description="Large ribosomal subunit protein bL35">
    <location>
        <begin position="1"/>
        <end position="65"/>
    </location>
</feature>
<dbReference type="EMBL" id="CP000825">
    <property type="protein sequence ID" value="ABV51547.1"/>
    <property type="molecule type" value="Genomic_DNA"/>
</dbReference>
<dbReference type="RefSeq" id="WP_011819271.1">
    <property type="nucleotide sequence ID" value="NC_009840.1"/>
</dbReference>
<dbReference type="SMR" id="A8G7G6"/>
<dbReference type="STRING" id="93060.P9215_19341"/>
<dbReference type="GeneID" id="60202104"/>
<dbReference type="KEGG" id="pmh:P9215_19341"/>
<dbReference type="eggNOG" id="COG0291">
    <property type="taxonomic scope" value="Bacteria"/>
</dbReference>
<dbReference type="HOGENOM" id="CLU_169643_4_0_3"/>
<dbReference type="OrthoDB" id="47476at2"/>
<dbReference type="Proteomes" id="UP000002014">
    <property type="component" value="Chromosome"/>
</dbReference>
<dbReference type="GO" id="GO:0022625">
    <property type="term" value="C:cytosolic large ribosomal subunit"/>
    <property type="evidence" value="ECO:0007669"/>
    <property type="project" value="TreeGrafter"/>
</dbReference>
<dbReference type="GO" id="GO:0003735">
    <property type="term" value="F:structural constituent of ribosome"/>
    <property type="evidence" value="ECO:0007669"/>
    <property type="project" value="InterPro"/>
</dbReference>
<dbReference type="GO" id="GO:0006412">
    <property type="term" value="P:translation"/>
    <property type="evidence" value="ECO:0007669"/>
    <property type="project" value="UniProtKB-UniRule"/>
</dbReference>
<dbReference type="FunFam" id="4.10.410.60:FF:000001">
    <property type="entry name" value="50S ribosomal protein L35"/>
    <property type="match status" value="1"/>
</dbReference>
<dbReference type="Gene3D" id="4.10.410.60">
    <property type="match status" value="1"/>
</dbReference>
<dbReference type="HAMAP" id="MF_00514">
    <property type="entry name" value="Ribosomal_bL35"/>
    <property type="match status" value="1"/>
</dbReference>
<dbReference type="InterPro" id="IPR001706">
    <property type="entry name" value="Ribosomal_bL35"/>
</dbReference>
<dbReference type="InterPro" id="IPR021137">
    <property type="entry name" value="Ribosomal_bL35-like"/>
</dbReference>
<dbReference type="InterPro" id="IPR018265">
    <property type="entry name" value="Ribosomal_bL35_CS"/>
</dbReference>
<dbReference type="InterPro" id="IPR037229">
    <property type="entry name" value="Ribosomal_bL35_sf"/>
</dbReference>
<dbReference type="NCBIfam" id="TIGR00001">
    <property type="entry name" value="rpmI_bact"/>
    <property type="match status" value="1"/>
</dbReference>
<dbReference type="PANTHER" id="PTHR33343">
    <property type="entry name" value="54S RIBOSOMAL PROTEIN BL35M"/>
    <property type="match status" value="1"/>
</dbReference>
<dbReference type="PANTHER" id="PTHR33343:SF1">
    <property type="entry name" value="LARGE RIBOSOMAL SUBUNIT PROTEIN BL35M"/>
    <property type="match status" value="1"/>
</dbReference>
<dbReference type="Pfam" id="PF01632">
    <property type="entry name" value="Ribosomal_L35p"/>
    <property type="match status" value="1"/>
</dbReference>
<dbReference type="PRINTS" id="PR00064">
    <property type="entry name" value="RIBOSOMALL35"/>
</dbReference>
<dbReference type="SUPFAM" id="SSF143034">
    <property type="entry name" value="L35p-like"/>
    <property type="match status" value="1"/>
</dbReference>
<dbReference type="PROSITE" id="PS00936">
    <property type="entry name" value="RIBOSOMAL_L35"/>
    <property type="match status" value="1"/>
</dbReference>
<name>RL35_PROM2</name>
<proteinExistence type="inferred from homology"/>
<evidence type="ECO:0000255" key="1">
    <source>
        <dbReference type="HAMAP-Rule" id="MF_00514"/>
    </source>
</evidence>
<evidence type="ECO:0000305" key="2"/>
<gene>
    <name evidence="1" type="primary">rpmI</name>
    <name evidence="1" type="synonym">rpl35</name>
    <name type="ordered locus">P9215_19341</name>
</gene>
<accession>A8G7G6</accession>
<organism>
    <name type="scientific">Prochlorococcus marinus (strain MIT 9215)</name>
    <dbReference type="NCBI Taxonomy" id="93060"/>
    <lineage>
        <taxon>Bacteria</taxon>
        <taxon>Bacillati</taxon>
        <taxon>Cyanobacteriota</taxon>
        <taxon>Cyanophyceae</taxon>
        <taxon>Synechococcales</taxon>
        <taxon>Prochlorococcaceae</taxon>
        <taxon>Prochlorococcus</taxon>
    </lineage>
</organism>